<protein>
    <recommendedName>
        <fullName evidence="6">Repulsive guidance molecule B</fullName>
    </recommendedName>
    <alternativeName>
        <fullName evidence="1">DRG11-responsive axonal guidance and outgrowth of neurite</fullName>
        <shortName evidence="1">DRAGON</shortName>
    </alternativeName>
</protein>
<comment type="function">
    <text evidence="1 4">Member of the repulsive guidance molecule (RGM) family that contributes to the patterning of the developing nervous system (By similarity). Acts as a bone morphogenetic protein (BMP) coreceptor that potentiates BMP signaling (By similarity). Promotes neuronal adhesion (By similarity). May inhibit neurite outgrowth.</text>
</comment>
<comment type="subunit">
    <text evidence="1 5">Homooligomer (By similarity). Interacts with DRGX (By similarity). Interacts with BMP2 and BMP4 (By similarity). Interacts with the BMP type I receptors ACVR1, BMPR1A and BMPR1B and with the BMP type II receptor ACVR2B (By similarity). The functional complex with its receptor NEO1/neogenin appears to be a heterotetramer with a 2:2 stoichiometry, RGM molecules acting as staples that bring two NEO1 receptors together without interacting themselves, this arrangement leads to activation of downstream signaling via RhoA.</text>
</comment>
<comment type="interaction">
    <interactant intactId="EBI-16155464">
        <id>Q6NW40</id>
    </interactant>
    <interactant intactId="EBI-1029262">
        <id>P12643</id>
        <label>BMP2</label>
    </interactant>
    <organismsDiffer>false</organismsDiffer>
    <experiments>7</experiments>
</comment>
<comment type="interaction">
    <interactant intactId="EBI-16155464">
        <id>Q6NW40</id>
    </interactant>
    <interactant intactId="EBI-774991">
        <id>P97798</id>
        <label>Neo1</label>
    </interactant>
    <organismsDiffer>true</organismsDiffer>
    <experiments>2</experiments>
</comment>
<comment type="subcellular location">
    <subcellularLocation>
        <location evidence="1">Cell membrane</location>
        <topology evidence="1">Lipid-anchor</topology>
        <topology evidence="1">GPI-anchor</topology>
    </subcellularLocation>
    <subcellularLocation>
        <location evidence="1">Membrane raft</location>
    </subcellularLocation>
</comment>
<comment type="PTM">
    <text evidence="1">GPI-anchored.</text>
</comment>
<comment type="PTM">
    <text evidence="5">Autocatalytically cleaved at low pH; the two chains remain linked via two disulfide bonds.</text>
</comment>
<comment type="similarity">
    <text evidence="7">Belongs to the repulsive guidance molecule (RGM) family.</text>
</comment>
<comment type="sequence caution" evidence="7">
    <conflict type="erroneous initiation">
        <sequence resource="EMBL-CDS" id="AAH67736"/>
    </conflict>
    <text>Extended N-terminus.</text>
</comment>
<comment type="sequence caution" evidence="7">
    <conflict type="miscellaneous discrepancy">
        <sequence resource="EMBL-CDS" id="BAC11268"/>
    </conflict>
    <text>Intron retention.</text>
</comment>
<proteinExistence type="evidence at protein level"/>
<organism>
    <name type="scientific">Homo sapiens</name>
    <name type="common">Human</name>
    <dbReference type="NCBI Taxonomy" id="9606"/>
    <lineage>
        <taxon>Eukaryota</taxon>
        <taxon>Metazoa</taxon>
        <taxon>Chordata</taxon>
        <taxon>Craniata</taxon>
        <taxon>Vertebrata</taxon>
        <taxon>Euteleostomi</taxon>
        <taxon>Mammalia</taxon>
        <taxon>Eutheria</taxon>
        <taxon>Euarchontoglires</taxon>
        <taxon>Primates</taxon>
        <taxon>Haplorrhini</taxon>
        <taxon>Catarrhini</taxon>
        <taxon>Hominidae</taxon>
        <taxon>Homo</taxon>
    </lineage>
</organism>
<evidence type="ECO:0000250" key="1">
    <source>
        <dbReference type="UniProtKB" id="Q7TQ33"/>
    </source>
</evidence>
<evidence type="ECO:0000255" key="2"/>
<evidence type="ECO:0000256" key="3">
    <source>
        <dbReference type="SAM" id="MobiDB-lite"/>
    </source>
</evidence>
<evidence type="ECO:0000269" key="4">
    <source>
    </source>
</evidence>
<evidence type="ECO:0000269" key="5">
    <source>
    </source>
</evidence>
<evidence type="ECO:0000303" key="6">
    <source>
    </source>
</evidence>
<evidence type="ECO:0000305" key="7"/>
<evidence type="ECO:0000312" key="8">
    <source>
        <dbReference type="HGNC" id="HGNC:26896"/>
    </source>
</evidence>
<evidence type="ECO:0007829" key="9">
    <source>
        <dbReference type="PDB" id="4BQ6"/>
    </source>
</evidence>
<evidence type="ECO:0007829" key="10">
    <source>
        <dbReference type="PDB" id="4BQ8"/>
    </source>
</evidence>
<evidence type="ECO:0007829" key="11">
    <source>
        <dbReference type="PDB" id="4UI2"/>
    </source>
</evidence>
<evidence type="ECO:0007829" key="12">
    <source>
        <dbReference type="PDB" id="6Z3J"/>
    </source>
</evidence>
<keyword id="KW-0002">3D-structure</keyword>
<keyword id="KW-0068">Autocatalytic cleavage</keyword>
<keyword id="KW-1003">Cell membrane</keyword>
<keyword id="KW-1015">Disulfide bond</keyword>
<keyword id="KW-0325">Glycoprotein</keyword>
<keyword id="KW-0336">GPI-anchor</keyword>
<keyword id="KW-0449">Lipoprotein</keyword>
<keyword id="KW-0472">Membrane</keyword>
<keyword id="KW-1267">Proteomics identification</keyword>
<keyword id="KW-1185">Reference proteome</keyword>
<keyword id="KW-0732">Signal</keyword>
<accession>Q6NW40</accession>
<accession>D6R9A0</accession>
<accession>Q8NC92</accession>
<dbReference type="EMBL" id="AK074887">
    <property type="protein sequence ID" value="BAC11268.1"/>
    <property type="status" value="ALT_SEQ"/>
    <property type="molecule type" value="mRNA"/>
</dbReference>
<dbReference type="EMBL" id="AC008522">
    <property type="status" value="NOT_ANNOTATED_CDS"/>
    <property type="molecule type" value="Genomic_DNA"/>
</dbReference>
<dbReference type="EMBL" id="BC067736">
    <property type="protein sequence ID" value="AAH67736.1"/>
    <property type="status" value="ALT_INIT"/>
    <property type="molecule type" value="mRNA"/>
</dbReference>
<dbReference type="CCDS" id="CCDS93751.1"/>
<dbReference type="RefSeq" id="NP_001012779.2">
    <property type="nucleotide sequence ID" value="NM_001012761.2"/>
</dbReference>
<dbReference type="RefSeq" id="NP_001353437.1">
    <property type="nucleotide sequence ID" value="NM_001366508.1"/>
</dbReference>
<dbReference type="RefSeq" id="XP_047273081.1">
    <property type="nucleotide sequence ID" value="XM_047417125.1"/>
</dbReference>
<dbReference type="PDB" id="4BQ6">
    <property type="method" value="X-ray"/>
    <property type="resolution" value="2.30 A"/>
    <property type="chains" value="C/E=50-168, D/F=169-410"/>
</dbReference>
<dbReference type="PDB" id="4BQ7">
    <property type="method" value="X-ray"/>
    <property type="resolution" value="6.60 A"/>
    <property type="chains" value="C/E=50-168, D/F=169-410"/>
</dbReference>
<dbReference type="PDB" id="4BQ8">
    <property type="method" value="X-ray"/>
    <property type="resolution" value="2.80 A"/>
    <property type="chains" value="B=50-168, C=169-410"/>
</dbReference>
<dbReference type="PDB" id="4UHZ">
    <property type="method" value="X-ray"/>
    <property type="resolution" value="2.85 A"/>
    <property type="chains" value="B=53-136"/>
</dbReference>
<dbReference type="PDB" id="4UI0">
    <property type="method" value="X-ray"/>
    <property type="resolution" value="2.80 A"/>
    <property type="chains" value="C=53-136"/>
</dbReference>
<dbReference type="PDB" id="4UI2">
    <property type="method" value="X-ray"/>
    <property type="resolution" value="3.15 A"/>
    <property type="chains" value="C=50-168, D=169-410"/>
</dbReference>
<dbReference type="PDB" id="6Z3H">
    <property type="method" value="X-ray"/>
    <property type="resolution" value="3.16 A"/>
    <property type="chains" value="B=53-136"/>
</dbReference>
<dbReference type="PDB" id="6Z3J">
    <property type="method" value="X-ray"/>
    <property type="resolution" value="1.65 A"/>
    <property type="chains" value="C/D=53-136"/>
</dbReference>
<dbReference type="PDB" id="6Z3M">
    <property type="method" value="X-ray"/>
    <property type="resolution" value="5.50 A"/>
    <property type="chains" value="C/D/I/J/O/P/S/T/U/V/W/X/c/d/i/j/o/p=53-412"/>
</dbReference>
<dbReference type="PDBsum" id="4BQ6"/>
<dbReference type="PDBsum" id="4BQ7"/>
<dbReference type="PDBsum" id="4BQ8"/>
<dbReference type="PDBsum" id="4UHZ"/>
<dbReference type="PDBsum" id="4UI0"/>
<dbReference type="PDBsum" id="4UI2"/>
<dbReference type="PDBsum" id="6Z3H"/>
<dbReference type="PDBsum" id="6Z3J"/>
<dbReference type="PDBsum" id="6Z3M"/>
<dbReference type="EMDB" id="EMD-12286"/>
<dbReference type="SMR" id="Q6NW40"/>
<dbReference type="BioGRID" id="130185">
    <property type="interactions" value="10"/>
</dbReference>
<dbReference type="DIP" id="DIP-61607N"/>
<dbReference type="FunCoup" id="Q6NW40">
    <property type="interactions" value="1188"/>
</dbReference>
<dbReference type="IntAct" id="Q6NW40">
    <property type="interactions" value="2"/>
</dbReference>
<dbReference type="STRING" id="9606.ENSP00000308219"/>
<dbReference type="GlyCosmos" id="Q6NW40">
    <property type="glycosylation" value="2 sites, No reported glycans"/>
</dbReference>
<dbReference type="GlyGen" id="Q6NW40">
    <property type="glycosylation" value="6 sites, 1 O-linked glycan (4 sites)"/>
</dbReference>
<dbReference type="iPTMnet" id="Q6NW40"/>
<dbReference type="PhosphoSitePlus" id="Q6NW40"/>
<dbReference type="BioMuta" id="RGMB"/>
<dbReference type="DMDM" id="327478562"/>
<dbReference type="MassIVE" id="Q6NW40"/>
<dbReference type="PaxDb" id="9606-ENSP00000308219"/>
<dbReference type="PeptideAtlas" id="Q6NW40"/>
<dbReference type="ProteomicsDB" id="66740"/>
<dbReference type="Antibodypedia" id="2207">
    <property type="antibodies" value="212 antibodies from 30 providers"/>
</dbReference>
<dbReference type="DNASU" id="285704"/>
<dbReference type="Ensembl" id="ENST00000513185.3">
    <property type="protein sequence ID" value="ENSP00000423256.1"/>
    <property type="gene ID" value="ENSG00000174136.13"/>
</dbReference>
<dbReference type="GeneID" id="285704"/>
<dbReference type="KEGG" id="hsa:285704"/>
<dbReference type="MANE-Select" id="ENST00000513185.3">
    <property type="protein sequence ID" value="ENSP00000423256.1"/>
    <property type="RefSeq nucleotide sequence ID" value="NM_001366508.1"/>
    <property type="RefSeq protein sequence ID" value="NP_001353437.1"/>
</dbReference>
<dbReference type="UCSC" id="uc063frq.1">
    <property type="organism name" value="human"/>
</dbReference>
<dbReference type="AGR" id="HGNC:26896"/>
<dbReference type="CTD" id="285704"/>
<dbReference type="DisGeNET" id="285704"/>
<dbReference type="GeneCards" id="RGMB"/>
<dbReference type="HGNC" id="HGNC:26896">
    <property type="gene designation" value="RGMB"/>
</dbReference>
<dbReference type="HPA" id="ENSG00000174136">
    <property type="expression patterns" value="Low tissue specificity"/>
</dbReference>
<dbReference type="MIM" id="612687">
    <property type="type" value="gene"/>
</dbReference>
<dbReference type="neXtProt" id="NX_Q6NW40"/>
<dbReference type="OpenTargets" id="ENSG00000174136"/>
<dbReference type="PharmGKB" id="PA134868641"/>
<dbReference type="VEuPathDB" id="HostDB:ENSG00000174136"/>
<dbReference type="eggNOG" id="ENOG502QSTJ">
    <property type="taxonomic scope" value="Eukaryota"/>
</dbReference>
<dbReference type="GeneTree" id="ENSGT00950000183112"/>
<dbReference type="HOGENOM" id="CLU_032775_1_1_1"/>
<dbReference type="InParanoid" id="Q6NW40"/>
<dbReference type="OrthoDB" id="10013795at2759"/>
<dbReference type="PAN-GO" id="Q6NW40">
    <property type="GO annotations" value="3 GO annotations based on evolutionary models"/>
</dbReference>
<dbReference type="PhylomeDB" id="Q6NW40"/>
<dbReference type="PathwayCommons" id="Q6NW40"/>
<dbReference type="Reactome" id="R-HSA-373752">
    <property type="pathway name" value="Netrin-1 signaling"/>
</dbReference>
<dbReference type="SignaLink" id="Q6NW40"/>
<dbReference type="BioGRID-ORCS" id="285704">
    <property type="hits" value="15 hits in 1147 CRISPR screens"/>
</dbReference>
<dbReference type="ChiTaRS" id="RGMB">
    <property type="organism name" value="human"/>
</dbReference>
<dbReference type="EvolutionaryTrace" id="Q6NW40"/>
<dbReference type="GeneWiki" id="RGMB"/>
<dbReference type="GenomeRNAi" id="285704"/>
<dbReference type="Pharos" id="Q6NW40">
    <property type="development level" value="Tbio"/>
</dbReference>
<dbReference type="PRO" id="PR:Q6NW40"/>
<dbReference type="Proteomes" id="UP000005640">
    <property type="component" value="Chromosome 5"/>
</dbReference>
<dbReference type="RNAct" id="Q6NW40">
    <property type="molecule type" value="protein"/>
</dbReference>
<dbReference type="Bgee" id="ENSG00000174136">
    <property type="expression patterns" value="Expressed in ileal mucosa and 190 other cell types or tissues"/>
</dbReference>
<dbReference type="ExpressionAtlas" id="Q6NW40">
    <property type="expression patterns" value="baseline and differential"/>
</dbReference>
<dbReference type="GO" id="GO:0005793">
    <property type="term" value="C:endoplasmic reticulum-Golgi intermediate compartment"/>
    <property type="evidence" value="ECO:0000250"/>
    <property type="project" value="HGNC-UCL"/>
</dbReference>
<dbReference type="GO" id="GO:0045121">
    <property type="term" value="C:membrane raft"/>
    <property type="evidence" value="ECO:0007669"/>
    <property type="project" value="UniProtKB-SubCell"/>
</dbReference>
<dbReference type="GO" id="GO:0005886">
    <property type="term" value="C:plasma membrane"/>
    <property type="evidence" value="ECO:0000250"/>
    <property type="project" value="HGNC-UCL"/>
</dbReference>
<dbReference type="GO" id="GO:0098552">
    <property type="term" value="C:side of membrane"/>
    <property type="evidence" value="ECO:0007669"/>
    <property type="project" value="UniProtKB-KW"/>
</dbReference>
<dbReference type="GO" id="GO:0015026">
    <property type="term" value="F:coreceptor activity"/>
    <property type="evidence" value="ECO:0000318"/>
    <property type="project" value="GO_Central"/>
</dbReference>
<dbReference type="GO" id="GO:0042802">
    <property type="term" value="F:identical protein binding"/>
    <property type="evidence" value="ECO:0000250"/>
    <property type="project" value="HGNC-UCL"/>
</dbReference>
<dbReference type="GO" id="GO:0030509">
    <property type="term" value="P:BMP signaling pathway"/>
    <property type="evidence" value="ECO:0000250"/>
    <property type="project" value="HGNC-UCL"/>
</dbReference>
<dbReference type="GO" id="GO:0007155">
    <property type="term" value="P:cell adhesion"/>
    <property type="evidence" value="ECO:0000250"/>
    <property type="project" value="HGNC-UCL"/>
</dbReference>
<dbReference type="GO" id="GO:0045893">
    <property type="term" value="P:positive regulation of DNA-templated transcription"/>
    <property type="evidence" value="ECO:0000250"/>
    <property type="project" value="HGNC-UCL"/>
</dbReference>
<dbReference type="GO" id="GO:0007165">
    <property type="term" value="P:signal transduction"/>
    <property type="evidence" value="ECO:0000250"/>
    <property type="project" value="HGNC-UCL"/>
</dbReference>
<dbReference type="FunFam" id="3.40.1000.10:FF:000001">
    <property type="entry name" value="Repulsive guidance molecule BMP co-receptor a"/>
    <property type="match status" value="1"/>
</dbReference>
<dbReference type="Gene3D" id="3.40.1000.10">
    <property type="entry name" value="Mog1/PsbP, alpha/beta/alpha sandwich"/>
    <property type="match status" value="1"/>
</dbReference>
<dbReference type="InterPro" id="IPR040287">
    <property type="entry name" value="RGM"/>
</dbReference>
<dbReference type="InterPro" id="IPR009496">
    <property type="entry name" value="RGM_C"/>
</dbReference>
<dbReference type="InterPro" id="IPR010536">
    <property type="entry name" value="RGM_N"/>
</dbReference>
<dbReference type="PANTHER" id="PTHR31428:SF5">
    <property type="entry name" value="REPULSIVE GUIDANCE MOLECULE B"/>
    <property type="match status" value="1"/>
</dbReference>
<dbReference type="PANTHER" id="PTHR31428">
    <property type="entry name" value="RGM DOMAIN FAMILY MEMBER DRAG-1"/>
    <property type="match status" value="1"/>
</dbReference>
<dbReference type="Pfam" id="PF06534">
    <property type="entry name" value="RGM_C"/>
    <property type="match status" value="1"/>
</dbReference>
<dbReference type="Pfam" id="PF06535">
    <property type="entry name" value="RGM_N"/>
    <property type="match status" value="1"/>
</dbReference>
<name>RGMB_HUMAN</name>
<gene>
    <name evidence="6 8" type="primary">RGMB</name>
</gene>
<reference key="1">
    <citation type="journal article" date="2004" name="Nat. Genet.">
        <title>Complete sequencing and characterization of 21,243 full-length human cDNAs.</title>
        <authorList>
            <person name="Ota T."/>
            <person name="Suzuki Y."/>
            <person name="Nishikawa T."/>
            <person name="Otsuki T."/>
            <person name="Sugiyama T."/>
            <person name="Irie R."/>
            <person name="Wakamatsu A."/>
            <person name="Hayashi K."/>
            <person name="Sato H."/>
            <person name="Nagai K."/>
            <person name="Kimura K."/>
            <person name="Makita H."/>
            <person name="Sekine M."/>
            <person name="Obayashi M."/>
            <person name="Nishi T."/>
            <person name="Shibahara T."/>
            <person name="Tanaka T."/>
            <person name="Ishii S."/>
            <person name="Yamamoto J."/>
            <person name="Saito K."/>
            <person name="Kawai Y."/>
            <person name="Isono Y."/>
            <person name="Nakamura Y."/>
            <person name="Nagahari K."/>
            <person name="Murakami K."/>
            <person name="Yasuda T."/>
            <person name="Iwayanagi T."/>
            <person name="Wagatsuma M."/>
            <person name="Shiratori A."/>
            <person name="Sudo H."/>
            <person name="Hosoiri T."/>
            <person name="Kaku Y."/>
            <person name="Kodaira H."/>
            <person name="Kondo H."/>
            <person name="Sugawara M."/>
            <person name="Takahashi M."/>
            <person name="Kanda K."/>
            <person name="Yokoi T."/>
            <person name="Furuya T."/>
            <person name="Kikkawa E."/>
            <person name="Omura Y."/>
            <person name="Abe K."/>
            <person name="Kamihara K."/>
            <person name="Katsuta N."/>
            <person name="Sato K."/>
            <person name="Tanikawa M."/>
            <person name="Yamazaki M."/>
            <person name="Ninomiya K."/>
            <person name="Ishibashi T."/>
            <person name="Yamashita H."/>
            <person name="Murakawa K."/>
            <person name="Fujimori K."/>
            <person name="Tanai H."/>
            <person name="Kimata M."/>
            <person name="Watanabe M."/>
            <person name="Hiraoka S."/>
            <person name="Chiba Y."/>
            <person name="Ishida S."/>
            <person name="Ono Y."/>
            <person name="Takiguchi S."/>
            <person name="Watanabe S."/>
            <person name="Yosida M."/>
            <person name="Hotuta T."/>
            <person name="Kusano J."/>
            <person name="Kanehori K."/>
            <person name="Takahashi-Fujii A."/>
            <person name="Hara H."/>
            <person name="Tanase T.-O."/>
            <person name="Nomura Y."/>
            <person name="Togiya S."/>
            <person name="Komai F."/>
            <person name="Hara R."/>
            <person name="Takeuchi K."/>
            <person name="Arita M."/>
            <person name="Imose N."/>
            <person name="Musashino K."/>
            <person name="Yuuki H."/>
            <person name="Oshima A."/>
            <person name="Sasaki N."/>
            <person name="Aotsuka S."/>
            <person name="Yoshikawa Y."/>
            <person name="Matsunawa H."/>
            <person name="Ichihara T."/>
            <person name="Shiohata N."/>
            <person name="Sano S."/>
            <person name="Moriya S."/>
            <person name="Momiyama H."/>
            <person name="Satoh N."/>
            <person name="Takami S."/>
            <person name="Terashima Y."/>
            <person name="Suzuki O."/>
            <person name="Nakagawa S."/>
            <person name="Senoh A."/>
            <person name="Mizoguchi H."/>
            <person name="Goto Y."/>
            <person name="Shimizu F."/>
            <person name="Wakebe H."/>
            <person name="Hishigaki H."/>
            <person name="Watanabe T."/>
            <person name="Sugiyama A."/>
            <person name="Takemoto M."/>
            <person name="Kawakami B."/>
            <person name="Yamazaki M."/>
            <person name="Watanabe K."/>
            <person name="Kumagai A."/>
            <person name="Itakura S."/>
            <person name="Fukuzumi Y."/>
            <person name="Fujimori Y."/>
            <person name="Komiyama M."/>
            <person name="Tashiro H."/>
            <person name="Tanigami A."/>
            <person name="Fujiwara T."/>
            <person name="Ono T."/>
            <person name="Yamada K."/>
            <person name="Fujii Y."/>
            <person name="Ozaki K."/>
            <person name="Hirao M."/>
            <person name="Ohmori Y."/>
            <person name="Kawabata A."/>
            <person name="Hikiji T."/>
            <person name="Kobatake N."/>
            <person name="Inagaki H."/>
            <person name="Ikema Y."/>
            <person name="Okamoto S."/>
            <person name="Okitani R."/>
            <person name="Kawakami T."/>
            <person name="Noguchi S."/>
            <person name="Itoh T."/>
            <person name="Shigeta K."/>
            <person name="Senba T."/>
            <person name="Matsumura K."/>
            <person name="Nakajima Y."/>
            <person name="Mizuno T."/>
            <person name="Morinaga M."/>
            <person name="Sasaki M."/>
            <person name="Togashi T."/>
            <person name="Oyama M."/>
            <person name="Hata H."/>
            <person name="Watanabe M."/>
            <person name="Komatsu T."/>
            <person name="Mizushima-Sugano J."/>
            <person name="Satoh T."/>
            <person name="Shirai Y."/>
            <person name="Takahashi Y."/>
            <person name="Nakagawa K."/>
            <person name="Okumura K."/>
            <person name="Nagase T."/>
            <person name="Nomura N."/>
            <person name="Kikuchi H."/>
            <person name="Masuho Y."/>
            <person name="Yamashita R."/>
            <person name="Nakai K."/>
            <person name="Yada T."/>
            <person name="Nakamura Y."/>
            <person name="Ohara O."/>
            <person name="Isogai T."/>
            <person name="Sugano S."/>
        </authorList>
    </citation>
    <scope>NUCLEOTIDE SEQUENCE [LARGE SCALE MRNA]</scope>
</reference>
<reference key="2">
    <citation type="journal article" date="2004" name="Nature">
        <title>The DNA sequence and comparative analysis of human chromosome 5.</title>
        <authorList>
            <person name="Schmutz J."/>
            <person name="Martin J."/>
            <person name="Terry A."/>
            <person name="Couronne O."/>
            <person name="Grimwood J."/>
            <person name="Lowry S."/>
            <person name="Gordon L.A."/>
            <person name="Scott D."/>
            <person name="Xie G."/>
            <person name="Huang W."/>
            <person name="Hellsten U."/>
            <person name="Tran-Gyamfi M."/>
            <person name="She X."/>
            <person name="Prabhakar S."/>
            <person name="Aerts A."/>
            <person name="Altherr M."/>
            <person name="Bajorek E."/>
            <person name="Black S."/>
            <person name="Branscomb E."/>
            <person name="Caoile C."/>
            <person name="Challacombe J.F."/>
            <person name="Chan Y.M."/>
            <person name="Denys M."/>
            <person name="Detter J.C."/>
            <person name="Escobar J."/>
            <person name="Flowers D."/>
            <person name="Fotopulos D."/>
            <person name="Glavina T."/>
            <person name="Gomez M."/>
            <person name="Gonzales E."/>
            <person name="Goodstein D."/>
            <person name="Grigoriev I."/>
            <person name="Groza M."/>
            <person name="Hammon N."/>
            <person name="Hawkins T."/>
            <person name="Haydu L."/>
            <person name="Israni S."/>
            <person name="Jett J."/>
            <person name="Kadner K."/>
            <person name="Kimball H."/>
            <person name="Kobayashi A."/>
            <person name="Lopez F."/>
            <person name="Lou Y."/>
            <person name="Martinez D."/>
            <person name="Medina C."/>
            <person name="Morgan J."/>
            <person name="Nandkeshwar R."/>
            <person name="Noonan J.P."/>
            <person name="Pitluck S."/>
            <person name="Pollard M."/>
            <person name="Predki P."/>
            <person name="Priest J."/>
            <person name="Ramirez L."/>
            <person name="Retterer J."/>
            <person name="Rodriguez A."/>
            <person name="Rogers S."/>
            <person name="Salamov A."/>
            <person name="Salazar A."/>
            <person name="Thayer N."/>
            <person name="Tice H."/>
            <person name="Tsai M."/>
            <person name="Ustaszewska A."/>
            <person name="Vo N."/>
            <person name="Wheeler J."/>
            <person name="Wu K."/>
            <person name="Yang J."/>
            <person name="Dickson M."/>
            <person name="Cheng J.-F."/>
            <person name="Eichler E.E."/>
            <person name="Olsen A."/>
            <person name="Pennacchio L.A."/>
            <person name="Rokhsar D.S."/>
            <person name="Richardson P."/>
            <person name="Lucas S.M."/>
            <person name="Myers R.M."/>
            <person name="Rubin E.M."/>
        </authorList>
    </citation>
    <scope>NUCLEOTIDE SEQUENCE [LARGE SCALE GENOMIC DNA]</scope>
</reference>
<reference key="3">
    <citation type="journal article" date="2004" name="Genome Res.">
        <title>The status, quality, and expansion of the NIH full-length cDNA project: the Mammalian Gene Collection (MGC).</title>
        <authorList>
            <consortium name="The MGC Project Team"/>
        </authorList>
    </citation>
    <scope>NUCLEOTIDE SEQUENCE [LARGE SCALE MRNA]</scope>
    <source>
        <tissue>Placenta</tissue>
    </source>
</reference>
<reference key="4">
    <citation type="journal article" date="2009" name="Biochem. Biophys. Res. Commun.">
        <title>Repulsive guidance molecule b inhibits neurite growth and is increased after spinal cord injury.</title>
        <authorList>
            <person name="Liu X."/>
            <person name="Hashimoto M."/>
            <person name="Horii H."/>
            <person name="Yamaguchi A."/>
            <person name="Naito K."/>
            <person name="Yamashita T."/>
        </authorList>
    </citation>
    <scope>FUNCTION</scope>
</reference>
<reference key="5">
    <citation type="journal article" date="2013" name="Science">
        <title>Structure of the repulsive guidance molecule (RGM)-neogenin signaling hub.</title>
        <authorList>
            <person name="Bell C.H."/>
            <person name="Healey E."/>
            <person name="van Erp S."/>
            <person name="Bishop B."/>
            <person name="Tang C."/>
            <person name="Gilbert R.J."/>
            <person name="Aricescu A.R."/>
            <person name="Pasterkamp R.J."/>
            <person name="Siebold C."/>
        </authorList>
    </citation>
    <scope>X-RAY CRYSTALLOGRAPHY (2.3 ANGSTROMS) OF 50-410 IN COMPLEX WITH MOUSE NEO1 RECEPTOR</scope>
    <scope>AUTOCATALYTIC CLEAVAGE</scope>
    <scope>MUTAGENESIS OF ALA-186 AND PRO-206</scope>
    <scope>DISULFIDE BONDS</scope>
</reference>
<feature type="signal peptide" evidence="2">
    <location>
        <begin position="1"/>
        <end position="45"/>
    </location>
</feature>
<feature type="chain" id="PRO_0000030394" description="Repulsive guidance molecule B">
    <location>
        <begin position="46"/>
        <end position="413"/>
    </location>
</feature>
<feature type="propeptide" id="PRO_0000030395" description="Removed in mature form" evidence="2">
    <location>
        <begin position="414"/>
        <end position="437"/>
    </location>
</feature>
<feature type="region of interest" description="Disordered" evidence="3">
    <location>
        <begin position="121"/>
        <end position="153"/>
    </location>
</feature>
<feature type="compositionally biased region" description="Polar residues" evidence="3">
    <location>
        <begin position="121"/>
        <end position="133"/>
    </location>
</feature>
<feature type="site" description="Cleavage; by autolysis" evidence="5">
    <location>
        <begin position="168"/>
        <end position="169"/>
    </location>
</feature>
<feature type="lipid moiety-binding region" description="GPI-anchor amidated asparagine" evidence="2">
    <location>
        <position position="413"/>
    </location>
</feature>
<feature type="glycosylation site" description="N-linked (GlcNAc...) asparagine" evidence="2">
    <location>
        <position position="120"/>
    </location>
</feature>
<feature type="glycosylation site" description="N-linked (GlcNAc...) asparagine" evidence="2">
    <location>
        <position position="383"/>
    </location>
</feature>
<feature type="disulfide bond" evidence="5">
    <location>
        <begin position="139"/>
        <end position="226"/>
    </location>
</feature>
<feature type="disulfide bond" evidence="5">
    <location>
        <begin position="163"/>
        <end position="312"/>
    </location>
</feature>
<feature type="mutagenesis site" description="Severely impairs interaction with NEO1." evidence="5">
    <original>A</original>
    <variation>R</variation>
    <location>
        <position position="186"/>
    </location>
</feature>
<feature type="mutagenesis site" description="Introduces a N-linked glycan; changes interaction with NEO1 from a 2:2 to a 1:1 stoichiometry." evidence="5">
    <original>P</original>
    <variation>N</variation>
    <location>
        <position position="206"/>
    </location>
</feature>
<feature type="sequence conflict" description="In Ref. 3; AAH67736." evidence="7" ref="3">
    <original>S</original>
    <variation>R</variation>
    <location>
        <position position="22"/>
    </location>
</feature>
<feature type="sequence conflict" description="In Ref. 3; AAH67736." evidence="7" ref="3">
    <original>E</original>
    <variation>G</variation>
    <location>
        <position position="225"/>
    </location>
</feature>
<feature type="helix" evidence="12">
    <location>
        <begin position="56"/>
        <end position="67"/>
    </location>
</feature>
<feature type="helix" evidence="12">
    <location>
        <begin position="77"/>
        <end position="94"/>
    </location>
</feature>
<feature type="helix" evidence="12">
    <location>
        <begin position="96"/>
        <end position="99"/>
    </location>
</feature>
<feature type="helix" evidence="12">
    <location>
        <begin position="103"/>
        <end position="118"/>
    </location>
</feature>
<feature type="strand" evidence="9">
    <location>
        <begin position="160"/>
        <end position="166"/>
    </location>
</feature>
<feature type="strand" evidence="9">
    <location>
        <begin position="170"/>
        <end position="172"/>
    </location>
</feature>
<feature type="strand" evidence="9">
    <location>
        <begin position="178"/>
        <end position="180"/>
    </location>
</feature>
<feature type="strand" evidence="9">
    <location>
        <begin position="185"/>
        <end position="205"/>
    </location>
</feature>
<feature type="strand" evidence="9">
    <location>
        <begin position="211"/>
        <end position="220"/>
    </location>
</feature>
<feature type="turn" evidence="9">
    <location>
        <begin position="224"/>
        <end position="226"/>
    </location>
</feature>
<feature type="strand" evidence="9">
    <location>
        <begin position="230"/>
        <end position="235"/>
    </location>
</feature>
<feature type="strand" evidence="9">
    <location>
        <begin position="248"/>
        <end position="254"/>
    </location>
</feature>
<feature type="strand" evidence="9">
    <location>
        <begin position="257"/>
        <end position="261"/>
    </location>
</feature>
<feature type="turn" evidence="11">
    <location>
        <begin position="264"/>
        <end position="267"/>
    </location>
</feature>
<feature type="strand" evidence="9">
    <location>
        <begin position="269"/>
        <end position="273"/>
    </location>
</feature>
<feature type="helix" evidence="9">
    <location>
        <begin position="274"/>
        <end position="276"/>
    </location>
</feature>
<feature type="strand" evidence="9">
    <location>
        <begin position="278"/>
        <end position="285"/>
    </location>
</feature>
<feature type="strand" evidence="9">
    <location>
        <begin position="288"/>
        <end position="296"/>
    </location>
</feature>
<feature type="helix" evidence="9">
    <location>
        <begin position="297"/>
        <end position="300"/>
    </location>
</feature>
<feature type="helix" evidence="9">
    <location>
        <begin position="311"/>
        <end position="314"/>
    </location>
</feature>
<feature type="helix" evidence="9">
    <location>
        <begin position="318"/>
        <end position="320"/>
    </location>
</feature>
<feature type="helix" evidence="10">
    <location>
        <begin position="326"/>
        <end position="333"/>
    </location>
</feature>
<sequence>MGLRAAPSSAAAAAAEVEQRRSPGLCPPPLELLLLLLFSLGLLHAGDCQQPAQCRIQKCTTDFVSLTSHLNSAVDGFDSEFCKALRAYAGCTQRTSKACRGNLVYHSAVLGISDLMSQRNCSKDGPTSSTNPEVTHDPCNYHSHAGAREHRRGDQNPPSYLFCGLFGDPHLRTFKDNFQTCKVEGAWPLIDNNYLSVQVTNVPVVPGSSATATNKITIIFKAHHECTDQKVYQAVTDDLPAAFVDGTTSGGDSDAKSLRIVERESGHYVEMHARYIGTTVFVRQVGRYLTLAIRMPEDLAMSYEESQDLQLCVNGCPLSERIDDGQGQVSAILGHSLPRTSLVQAWPGYTLETANTQCHEKMPVKDIYFQSCVFDLLTTGDANFTAAAHSALEDVEALHPRKERWHIFPSSGNGTPRGGSDLSVSLGLTCLILIVFL</sequence>